<comment type="function">
    <text evidence="1">Binds to 23S rRNA. Forms part of two intersubunit bridges in the 70S ribosome.</text>
</comment>
<comment type="subunit">
    <text evidence="1">Part of the 50S ribosomal subunit. Forms a cluster with proteins L3 and L19. In the 70S ribosome, L14 and L19 interact and together make contacts with the 16S rRNA in bridges B5 and B8.</text>
</comment>
<comment type="similarity">
    <text evidence="1">Belongs to the universal ribosomal protein uL14 family.</text>
</comment>
<reference key="1">
    <citation type="submission" date="2008-10" db="EMBL/GenBank/DDBJ databases">
        <title>Genome sequence of Bacillus cereus AH187.</title>
        <authorList>
            <person name="Dodson R.J."/>
            <person name="Durkin A.S."/>
            <person name="Rosovitz M.J."/>
            <person name="Rasko D.A."/>
            <person name="Kolsto A.B."/>
            <person name="Okstad O.A."/>
            <person name="Ravel J."/>
            <person name="Sutton G."/>
        </authorList>
    </citation>
    <scope>NUCLEOTIDE SEQUENCE [LARGE SCALE GENOMIC DNA]</scope>
    <source>
        <strain>AH187</strain>
    </source>
</reference>
<dbReference type="EMBL" id="CP001177">
    <property type="protein sequence ID" value="ACJ81934.1"/>
    <property type="molecule type" value="Genomic_DNA"/>
</dbReference>
<dbReference type="SMR" id="B7HQV4"/>
<dbReference type="KEGG" id="bcr:BCAH187_A0151"/>
<dbReference type="HOGENOM" id="CLU_095071_2_1_9"/>
<dbReference type="Proteomes" id="UP000002214">
    <property type="component" value="Chromosome"/>
</dbReference>
<dbReference type="GO" id="GO:0022625">
    <property type="term" value="C:cytosolic large ribosomal subunit"/>
    <property type="evidence" value="ECO:0007669"/>
    <property type="project" value="TreeGrafter"/>
</dbReference>
<dbReference type="GO" id="GO:0070180">
    <property type="term" value="F:large ribosomal subunit rRNA binding"/>
    <property type="evidence" value="ECO:0007669"/>
    <property type="project" value="TreeGrafter"/>
</dbReference>
<dbReference type="GO" id="GO:0003735">
    <property type="term" value="F:structural constituent of ribosome"/>
    <property type="evidence" value="ECO:0007669"/>
    <property type="project" value="InterPro"/>
</dbReference>
<dbReference type="GO" id="GO:0006412">
    <property type="term" value="P:translation"/>
    <property type="evidence" value="ECO:0007669"/>
    <property type="project" value="UniProtKB-UniRule"/>
</dbReference>
<dbReference type="CDD" id="cd00337">
    <property type="entry name" value="Ribosomal_uL14"/>
    <property type="match status" value="1"/>
</dbReference>
<dbReference type="FunFam" id="2.40.150.20:FF:000001">
    <property type="entry name" value="50S ribosomal protein L14"/>
    <property type="match status" value="1"/>
</dbReference>
<dbReference type="Gene3D" id="2.40.150.20">
    <property type="entry name" value="Ribosomal protein L14"/>
    <property type="match status" value="1"/>
</dbReference>
<dbReference type="HAMAP" id="MF_01367">
    <property type="entry name" value="Ribosomal_uL14"/>
    <property type="match status" value="1"/>
</dbReference>
<dbReference type="InterPro" id="IPR000218">
    <property type="entry name" value="Ribosomal_uL14"/>
</dbReference>
<dbReference type="InterPro" id="IPR005745">
    <property type="entry name" value="Ribosomal_uL14_bac-type"/>
</dbReference>
<dbReference type="InterPro" id="IPR019972">
    <property type="entry name" value="Ribosomal_uL14_CS"/>
</dbReference>
<dbReference type="InterPro" id="IPR036853">
    <property type="entry name" value="Ribosomal_uL14_sf"/>
</dbReference>
<dbReference type="NCBIfam" id="TIGR01067">
    <property type="entry name" value="rplN_bact"/>
    <property type="match status" value="1"/>
</dbReference>
<dbReference type="PANTHER" id="PTHR11761">
    <property type="entry name" value="50S/60S RIBOSOMAL PROTEIN L14/L23"/>
    <property type="match status" value="1"/>
</dbReference>
<dbReference type="PANTHER" id="PTHR11761:SF3">
    <property type="entry name" value="LARGE RIBOSOMAL SUBUNIT PROTEIN UL14M"/>
    <property type="match status" value="1"/>
</dbReference>
<dbReference type="Pfam" id="PF00238">
    <property type="entry name" value="Ribosomal_L14"/>
    <property type="match status" value="1"/>
</dbReference>
<dbReference type="SMART" id="SM01374">
    <property type="entry name" value="Ribosomal_L14"/>
    <property type="match status" value="1"/>
</dbReference>
<dbReference type="SUPFAM" id="SSF50193">
    <property type="entry name" value="Ribosomal protein L14"/>
    <property type="match status" value="1"/>
</dbReference>
<dbReference type="PROSITE" id="PS00049">
    <property type="entry name" value="RIBOSOMAL_L14"/>
    <property type="match status" value="1"/>
</dbReference>
<accession>B7HQV4</accession>
<keyword id="KW-0687">Ribonucleoprotein</keyword>
<keyword id="KW-0689">Ribosomal protein</keyword>
<keyword id="KW-0694">RNA-binding</keyword>
<keyword id="KW-0699">rRNA-binding</keyword>
<gene>
    <name evidence="1" type="primary">rplN</name>
    <name type="ordered locus">BCAH187_A0151</name>
</gene>
<sequence length="122" mass="13120">MIQQESRLKVADNSGARELLTIKVLGGSGRKYANIGDIIVATVKQATPGGVVKKGDVVKAVVVRTKSGARRPDGSYIKFDENAAVIIKDDKSPRGTRIFGPVARELRDSNFMKIVSLAPEVL</sequence>
<protein>
    <recommendedName>
        <fullName evidence="1">Large ribosomal subunit protein uL14</fullName>
    </recommendedName>
    <alternativeName>
        <fullName evidence="2">50S ribosomal protein L14</fullName>
    </alternativeName>
</protein>
<proteinExistence type="inferred from homology"/>
<name>RL14_BACC7</name>
<evidence type="ECO:0000255" key="1">
    <source>
        <dbReference type="HAMAP-Rule" id="MF_01367"/>
    </source>
</evidence>
<evidence type="ECO:0000305" key="2"/>
<feature type="chain" id="PRO_1000144223" description="Large ribosomal subunit protein uL14">
    <location>
        <begin position="1"/>
        <end position="122"/>
    </location>
</feature>
<organism>
    <name type="scientific">Bacillus cereus (strain AH187)</name>
    <dbReference type="NCBI Taxonomy" id="405534"/>
    <lineage>
        <taxon>Bacteria</taxon>
        <taxon>Bacillati</taxon>
        <taxon>Bacillota</taxon>
        <taxon>Bacilli</taxon>
        <taxon>Bacillales</taxon>
        <taxon>Bacillaceae</taxon>
        <taxon>Bacillus</taxon>
        <taxon>Bacillus cereus group</taxon>
    </lineage>
</organism>